<organism>
    <name type="scientific">Synechocystis sp. (strain ATCC 27184 / PCC 6803 / Kazusa)</name>
    <dbReference type="NCBI Taxonomy" id="1111708"/>
    <lineage>
        <taxon>Bacteria</taxon>
        <taxon>Bacillati</taxon>
        <taxon>Cyanobacteriota</taxon>
        <taxon>Cyanophyceae</taxon>
        <taxon>Synechococcales</taxon>
        <taxon>Merismopediaceae</taxon>
        <taxon>Synechocystis</taxon>
    </lineage>
</organism>
<evidence type="ECO:0000255" key="1">
    <source>
        <dbReference type="PROSITE-ProRule" id="PRU00159"/>
    </source>
</evidence>
<evidence type="ECO:0000255" key="2">
    <source>
        <dbReference type="PROSITE-ProRule" id="PRU10027"/>
    </source>
</evidence>
<evidence type="ECO:0000256" key="3">
    <source>
        <dbReference type="SAM" id="MobiDB-lite"/>
    </source>
</evidence>
<gene>
    <name type="primary">spkC</name>
    <name type="ordered locus">slr0599</name>
</gene>
<proteinExistence type="evidence at protein level"/>
<comment type="catalytic activity">
    <reaction>
        <text>L-seryl-[protein] + ATP = O-phospho-L-seryl-[protein] + ADP + H(+)</text>
        <dbReference type="Rhea" id="RHEA:17989"/>
        <dbReference type="Rhea" id="RHEA-COMP:9863"/>
        <dbReference type="Rhea" id="RHEA-COMP:11604"/>
        <dbReference type="ChEBI" id="CHEBI:15378"/>
        <dbReference type="ChEBI" id="CHEBI:29999"/>
        <dbReference type="ChEBI" id="CHEBI:30616"/>
        <dbReference type="ChEBI" id="CHEBI:83421"/>
        <dbReference type="ChEBI" id="CHEBI:456216"/>
        <dbReference type="EC" id="2.7.11.1"/>
    </reaction>
</comment>
<comment type="catalytic activity">
    <reaction>
        <text>L-threonyl-[protein] + ATP = O-phospho-L-threonyl-[protein] + ADP + H(+)</text>
        <dbReference type="Rhea" id="RHEA:46608"/>
        <dbReference type="Rhea" id="RHEA-COMP:11060"/>
        <dbReference type="Rhea" id="RHEA-COMP:11605"/>
        <dbReference type="ChEBI" id="CHEBI:15378"/>
        <dbReference type="ChEBI" id="CHEBI:30013"/>
        <dbReference type="ChEBI" id="CHEBI:30616"/>
        <dbReference type="ChEBI" id="CHEBI:61977"/>
        <dbReference type="ChEBI" id="CHEBI:456216"/>
        <dbReference type="EC" id="2.7.11.1"/>
    </reaction>
</comment>
<comment type="similarity">
    <text evidence="1">Belongs to the protein kinase superfamily. Ser/Thr protein kinase family.</text>
</comment>
<dbReference type="EC" id="2.7.11.1"/>
<dbReference type="EMBL" id="AB046599">
    <property type="protein sequence ID" value="BAB17035.1"/>
    <property type="molecule type" value="Genomic_DNA"/>
</dbReference>
<dbReference type="EMBL" id="BA000022">
    <property type="protein sequence ID" value="BAA18865.1"/>
    <property type="molecule type" value="Genomic_DNA"/>
</dbReference>
<dbReference type="PIR" id="S76953">
    <property type="entry name" value="S76953"/>
</dbReference>
<dbReference type="SMR" id="P74745"/>
<dbReference type="FunCoup" id="P74745">
    <property type="interactions" value="34"/>
</dbReference>
<dbReference type="IntAct" id="P74745">
    <property type="interactions" value="5"/>
</dbReference>
<dbReference type="STRING" id="1148.gene:10500637"/>
<dbReference type="PaxDb" id="1148-1653955"/>
<dbReference type="EnsemblBacteria" id="BAA18865">
    <property type="protein sequence ID" value="BAA18865"/>
    <property type="gene ID" value="BAA18865"/>
</dbReference>
<dbReference type="KEGG" id="syn:slr0599"/>
<dbReference type="eggNOG" id="COG0515">
    <property type="taxonomic scope" value="Bacteria"/>
</dbReference>
<dbReference type="InParanoid" id="P74745"/>
<dbReference type="PhylomeDB" id="P74745"/>
<dbReference type="Proteomes" id="UP000001425">
    <property type="component" value="Chromosome"/>
</dbReference>
<dbReference type="GO" id="GO:0005524">
    <property type="term" value="F:ATP binding"/>
    <property type="evidence" value="ECO:0007669"/>
    <property type="project" value="UniProtKB-KW"/>
</dbReference>
<dbReference type="GO" id="GO:0106310">
    <property type="term" value="F:protein serine kinase activity"/>
    <property type="evidence" value="ECO:0007669"/>
    <property type="project" value="RHEA"/>
</dbReference>
<dbReference type="GO" id="GO:0004674">
    <property type="term" value="F:protein serine/threonine kinase activity"/>
    <property type="evidence" value="ECO:0000318"/>
    <property type="project" value="GO_Central"/>
</dbReference>
<dbReference type="CDD" id="cd14014">
    <property type="entry name" value="STKc_PknB_like"/>
    <property type="match status" value="1"/>
</dbReference>
<dbReference type="Gene3D" id="3.30.200.20">
    <property type="entry name" value="Phosphorylase Kinase, domain 1"/>
    <property type="match status" value="1"/>
</dbReference>
<dbReference type="Gene3D" id="1.10.510.10">
    <property type="entry name" value="Transferase(Phosphotransferase) domain 1"/>
    <property type="match status" value="1"/>
</dbReference>
<dbReference type="InterPro" id="IPR011009">
    <property type="entry name" value="Kinase-like_dom_sf"/>
</dbReference>
<dbReference type="InterPro" id="IPR000719">
    <property type="entry name" value="Prot_kinase_dom"/>
</dbReference>
<dbReference type="InterPro" id="IPR017441">
    <property type="entry name" value="Protein_kinase_ATP_BS"/>
</dbReference>
<dbReference type="InterPro" id="IPR008271">
    <property type="entry name" value="Ser/Thr_kinase_AS"/>
</dbReference>
<dbReference type="PANTHER" id="PTHR24363">
    <property type="entry name" value="SERINE/THREONINE PROTEIN KINASE"/>
    <property type="match status" value="1"/>
</dbReference>
<dbReference type="PANTHER" id="PTHR24363:SF0">
    <property type="entry name" value="SERINE_THREONINE KINASE LIKE DOMAIN CONTAINING 1"/>
    <property type="match status" value="1"/>
</dbReference>
<dbReference type="Pfam" id="PF00069">
    <property type="entry name" value="Pkinase"/>
    <property type="match status" value="1"/>
</dbReference>
<dbReference type="PRINTS" id="PR01217">
    <property type="entry name" value="PRICHEXTENSN"/>
</dbReference>
<dbReference type="SMART" id="SM00220">
    <property type="entry name" value="S_TKc"/>
    <property type="match status" value="1"/>
</dbReference>
<dbReference type="SUPFAM" id="SSF56112">
    <property type="entry name" value="Protein kinase-like (PK-like)"/>
    <property type="match status" value="1"/>
</dbReference>
<dbReference type="PROSITE" id="PS00107">
    <property type="entry name" value="PROTEIN_KINASE_ATP"/>
    <property type="match status" value="1"/>
</dbReference>
<dbReference type="PROSITE" id="PS50011">
    <property type="entry name" value="PROTEIN_KINASE_DOM"/>
    <property type="match status" value="1"/>
</dbReference>
<dbReference type="PROSITE" id="PS00108">
    <property type="entry name" value="PROTEIN_KINASE_ST"/>
    <property type="match status" value="1"/>
</dbReference>
<sequence>MVTPLKLLNNRYRIIETLGRGGFGETFLAQDTHMPSARKCVIKHLKPVLENPEIPSWLRERFHREAATLEELGENHPQIPQLYAYFSEGEDFYLVQEWIPGLTLTQAHAQKGNFSSTAVEELLLGILPVLEFIHQRRIIHRDIKPDNIILREADGKPILIDFGIIKETMGTLVNPDGRSAYSVALGTPGYMASEQAAGRPVFSSDLYSLGLTAIFLLTGKTPQYLTSDSRTGEILWRQGAPQVSPTLAKVIDQAVRYHPRERFNSATAMAQTLQGNFSNVPMTKGDRPGNTVANGKTKSNHQPTAPTLVVGTPYNANDTQATKVYTQEFTGYTETQEGSPLMKWVVMPLVVLLVIGGGMAAGFWVTSQRRNNPPPAVEEPTEETPIPLPSLEPRPNLFETPSPIPTPATPSPEPTPSPSPSPETTSSPTEDTITPMEPEPSLDEPAPIPEPKPSPSPTISPQPSPTISIPVTPAPVPKPSPSPTPKPTVPPQISPTPQPSNTVPVIPPPENPSAETEPNLPAPPVGEKPIDPEQN</sequence>
<accession>P74745</accession>
<keyword id="KW-0067">ATP-binding</keyword>
<keyword id="KW-0418">Kinase</keyword>
<keyword id="KW-0547">Nucleotide-binding</keyword>
<keyword id="KW-1185">Reference proteome</keyword>
<keyword id="KW-0723">Serine/threonine-protein kinase</keyword>
<keyword id="KW-0808">Transferase</keyword>
<protein>
    <recommendedName>
        <fullName>Serine/threonine-protein kinase C</fullName>
        <ecNumber>2.7.11.1</ecNumber>
    </recommendedName>
</protein>
<feature type="chain" id="PRO_0000171241" description="Serine/threonine-protein kinase C">
    <location>
        <begin position="1"/>
        <end position="535"/>
    </location>
</feature>
<feature type="domain" description="Protein kinase" evidence="1">
    <location>
        <begin position="12"/>
        <end position="277"/>
    </location>
</feature>
<feature type="region of interest" description="Disordered" evidence="3">
    <location>
        <begin position="371"/>
        <end position="535"/>
    </location>
</feature>
<feature type="compositionally biased region" description="Pro residues" evidence="3">
    <location>
        <begin position="402"/>
        <end position="421"/>
    </location>
</feature>
<feature type="compositionally biased region" description="Low complexity" evidence="3">
    <location>
        <begin position="422"/>
        <end position="435"/>
    </location>
</feature>
<feature type="compositionally biased region" description="Pro residues" evidence="3">
    <location>
        <begin position="446"/>
        <end position="464"/>
    </location>
</feature>
<feature type="compositionally biased region" description="Pro residues" evidence="3">
    <location>
        <begin position="472"/>
        <end position="498"/>
    </location>
</feature>
<feature type="active site" description="Proton acceptor" evidence="1 2">
    <location>
        <position position="142"/>
    </location>
</feature>
<feature type="binding site" evidence="1">
    <location>
        <begin position="18"/>
        <end position="26"/>
    </location>
    <ligand>
        <name>ATP</name>
        <dbReference type="ChEBI" id="CHEBI:30616"/>
    </ligand>
</feature>
<feature type="binding site" evidence="1">
    <location>
        <position position="43"/>
    </location>
    <ligand>
        <name>ATP</name>
        <dbReference type="ChEBI" id="CHEBI:30616"/>
    </ligand>
</feature>
<name>SPKC_SYNY3</name>
<reference key="1">
    <citation type="journal article" date="2002" name="DNA Res.">
        <title>Biochemical examination of the potential eukaryotic-type protein kinase genes in the complete genome of the unicellular Cyanobacterium synechocystis sp. PCC 6803.</title>
        <authorList>
            <person name="Kamei A."/>
            <person name="Yuasa T."/>
            <person name="Geng X."/>
            <person name="Ikeuchi M."/>
        </authorList>
    </citation>
    <scope>NUCLEOTIDE SEQUENCE [GENOMIC DNA]</scope>
    <scope>CHARACTERIZATION</scope>
</reference>
<reference key="2">
    <citation type="journal article" date="1996" name="DNA Res.">
        <title>Sequence analysis of the genome of the unicellular cyanobacterium Synechocystis sp. strain PCC6803. II. Sequence determination of the entire genome and assignment of potential protein-coding regions.</title>
        <authorList>
            <person name="Kaneko T."/>
            <person name="Sato S."/>
            <person name="Kotani H."/>
            <person name="Tanaka A."/>
            <person name="Asamizu E."/>
            <person name="Nakamura Y."/>
            <person name="Miyajima N."/>
            <person name="Hirosawa M."/>
            <person name="Sugiura M."/>
            <person name="Sasamoto S."/>
            <person name="Kimura T."/>
            <person name="Hosouchi T."/>
            <person name="Matsuno A."/>
            <person name="Muraki A."/>
            <person name="Nakazaki N."/>
            <person name="Naruo K."/>
            <person name="Okumura S."/>
            <person name="Shimpo S."/>
            <person name="Takeuchi C."/>
            <person name="Wada T."/>
            <person name="Watanabe A."/>
            <person name="Yamada M."/>
            <person name="Yasuda M."/>
            <person name="Tabata S."/>
        </authorList>
    </citation>
    <scope>NUCLEOTIDE SEQUENCE [LARGE SCALE GENOMIC DNA]</scope>
    <source>
        <strain>ATCC 27184 / PCC 6803 / Kazusa</strain>
    </source>
</reference>